<comment type="function">
    <text evidence="1">This protein specifically catalyzes the removal of signal peptides from prolipoproteins.</text>
</comment>
<comment type="catalytic activity">
    <reaction evidence="1">
        <text>Release of signal peptides from bacterial membrane prolipoproteins. Hydrolyzes -Xaa-Yaa-Zaa-|-(S,diacylglyceryl)Cys-, in which Xaa is hydrophobic (preferably Leu), and Yaa (Ala or Ser) and Zaa (Gly or Ala) have small, neutral side chains.</text>
        <dbReference type="EC" id="3.4.23.36"/>
    </reaction>
</comment>
<comment type="pathway">
    <text evidence="1">Protein modification; lipoprotein biosynthesis (signal peptide cleavage).</text>
</comment>
<comment type="subcellular location">
    <subcellularLocation>
        <location evidence="1">Cell inner membrane</location>
        <topology evidence="1">Multi-pass membrane protein</topology>
    </subcellularLocation>
</comment>
<comment type="similarity">
    <text evidence="1">Belongs to the peptidase A8 family.</text>
</comment>
<evidence type="ECO:0000255" key="1">
    <source>
        <dbReference type="HAMAP-Rule" id="MF_00161"/>
    </source>
</evidence>
<keyword id="KW-0064">Aspartyl protease</keyword>
<keyword id="KW-0997">Cell inner membrane</keyword>
<keyword id="KW-1003">Cell membrane</keyword>
<keyword id="KW-0378">Hydrolase</keyword>
<keyword id="KW-0472">Membrane</keyword>
<keyword id="KW-0645">Protease</keyword>
<keyword id="KW-0812">Transmembrane</keyword>
<keyword id="KW-1133">Transmembrane helix</keyword>
<gene>
    <name evidence="1" type="primary">lspA</name>
    <name type="ordered locus">NTHI1181</name>
</gene>
<sequence length="171" mass="19351">MSKKSGLSFLWLSAVAFVVDLLTKYIVVQKFDLYESVNVLPVFNLTYVRNYGAAFSFLADHSGWQQYFFILLALAISGMLVYFLAKNNAEQKIQNSAYALIIGGALANMVDRTYNGFVVDFFDFYWDIYHYPVFNIADIAICIGAGLLALDAFKSEKKKVQDKQVEKCGQK</sequence>
<proteinExistence type="inferred from homology"/>
<accession>Q4QLQ6</accession>
<protein>
    <recommendedName>
        <fullName evidence="1">Lipoprotein signal peptidase</fullName>
        <ecNumber evidence="1">3.4.23.36</ecNumber>
    </recommendedName>
    <alternativeName>
        <fullName evidence="1">Prolipoprotein signal peptidase</fullName>
    </alternativeName>
    <alternativeName>
        <fullName evidence="1">Signal peptidase II</fullName>
        <shortName evidence="1">SPase II</shortName>
    </alternativeName>
</protein>
<dbReference type="EC" id="3.4.23.36" evidence="1"/>
<dbReference type="EMBL" id="CP000057">
    <property type="protein sequence ID" value="AAX88041.1"/>
    <property type="molecule type" value="Genomic_DNA"/>
</dbReference>
<dbReference type="RefSeq" id="WP_011272344.1">
    <property type="nucleotide sequence ID" value="NC_007146.2"/>
</dbReference>
<dbReference type="SMR" id="Q4QLQ6"/>
<dbReference type="MEROPS" id="A08.001"/>
<dbReference type="KEGG" id="hit:NTHI1181"/>
<dbReference type="HOGENOM" id="CLU_083252_4_0_6"/>
<dbReference type="UniPathway" id="UPA00665"/>
<dbReference type="Proteomes" id="UP000002525">
    <property type="component" value="Chromosome"/>
</dbReference>
<dbReference type="GO" id="GO:0005886">
    <property type="term" value="C:plasma membrane"/>
    <property type="evidence" value="ECO:0007669"/>
    <property type="project" value="UniProtKB-SubCell"/>
</dbReference>
<dbReference type="GO" id="GO:0004190">
    <property type="term" value="F:aspartic-type endopeptidase activity"/>
    <property type="evidence" value="ECO:0007669"/>
    <property type="project" value="UniProtKB-UniRule"/>
</dbReference>
<dbReference type="GO" id="GO:0006508">
    <property type="term" value="P:proteolysis"/>
    <property type="evidence" value="ECO:0007669"/>
    <property type="project" value="UniProtKB-KW"/>
</dbReference>
<dbReference type="HAMAP" id="MF_00161">
    <property type="entry name" value="LspA"/>
    <property type="match status" value="1"/>
</dbReference>
<dbReference type="InterPro" id="IPR001872">
    <property type="entry name" value="Peptidase_A8"/>
</dbReference>
<dbReference type="NCBIfam" id="TIGR00077">
    <property type="entry name" value="lspA"/>
    <property type="match status" value="1"/>
</dbReference>
<dbReference type="PANTHER" id="PTHR33695">
    <property type="entry name" value="LIPOPROTEIN SIGNAL PEPTIDASE"/>
    <property type="match status" value="1"/>
</dbReference>
<dbReference type="PANTHER" id="PTHR33695:SF1">
    <property type="entry name" value="LIPOPROTEIN SIGNAL PEPTIDASE"/>
    <property type="match status" value="1"/>
</dbReference>
<dbReference type="Pfam" id="PF01252">
    <property type="entry name" value="Peptidase_A8"/>
    <property type="match status" value="1"/>
</dbReference>
<dbReference type="PRINTS" id="PR00781">
    <property type="entry name" value="LIPOSIGPTASE"/>
</dbReference>
<feature type="chain" id="PRO_0000289388" description="Lipoprotein signal peptidase">
    <location>
        <begin position="1"/>
        <end position="171"/>
    </location>
</feature>
<feature type="transmembrane region" description="Helical" evidence="1">
    <location>
        <begin position="8"/>
        <end position="28"/>
    </location>
</feature>
<feature type="transmembrane region" description="Helical" evidence="1">
    <location>
        <begin position="64"/>
        <end position="84"/>
    </location>
</feature>
<feature type="transmembrane region" description="Helical" evidence="1">
    <location>
        <begin position="96"/>
        <end position="118"/>
    </location>
</feature>
<feature type="transmembrane region" description="Helical" evidence="1">
    <location>
        <begin position="133"/>
        <end position="153"/>
    </location>
</feature>
<feature type="active site" evidence="1">
    <location>
        <position position="120"/>
    </location>
</feature>
<feature type="active site" evidence="1">
    <location>
        <position position="138"/>
    </location>
</feature>
<organism>
    <name type="scientific">Haemophilus influenzae (strain 86-028NP)</name>
    <dbReference type="NCBI Taxonomy" id="281310"/>
    <lineage>
        <taxon>Bacteria</taxon>
        <taxon>Pseudomonadati</taxon>
        <taxon>Pseudomonadota</taxon>
        <taxon>Gammaproteobacteria</taxon>
        <taxon>Pasteurellales</taxon>
        <taxon>Pasteurellaceae</taxon>
        <taxon>Haemophilus</taxon>
    </lineage>
</organism>
<name>LSPA_HAEI8</name>
<reference key="1">
    <citation type="journal article" date="2005" name="J. Bacteriol.">
        <title>Genomic sequence of an otitis media isolate of nontypeable Haemophilus influenzae: comparative study with H. influenzae serotype d, strain KW20.</title>
        <authorList>
            <person name="Harrison A."/>
            <person name="Dyer D.W."/>
            <person name="Gillaspy A."/>
            <person name="Ray W.C."/>
            <person name="Mungur R."/>
            <person name="Carson M.B."/>
            <person name="Zhong H."/>
            <person name="Gipson J."/>
            <person name="Gipson M."/>
            <person name="Johnson L.S."/>
            <person name="Lewis L."/>
            <person name="Bakaletz L.O."/>
            <person name="Munson R.S. Jr."/>
        </authorList>
    </citation>
    <scope>NUCLEOTIDE SEQUENCE [LARGE SCALE GENOMIC DNA]</scope>
    <source>
        <strain>86-028NP</strain>
    </source>
</reference>